<evidence type="ECO:0000255" key="1">
    <source>
        <dbReference type="PROSITE-ProRule" id="PRU00316"/>
    </source>
</evidence>
<evidence type="ECO:0000255" key="2">
    <source>
        <dbReference type="PROSITE-ProRule" id="PRU01258"/>
    </source>
</evidence>
<evidence type="ECO:0000269" key="3">
    <source>
    </source>
</evidence>
<evidence type="ECO:0000305" key="4"/>
<feature type="signal peptide" evidence="3">
    <location>
        <begin position="1"/>
        <end position="30"/>
    </location>
</feature>
<feature type="chain" id="PRO_0000011906" description="Chitinase D">
    <location>
        <begin position="31"/>
        <end position="524"/>
    </location>
</feature>
<feature type="domain" description="Fibronectin type-III" evidence="1">
    <location>
        <begin position="95"/>
        <end position="180"/>
    </location>
</feature>
<feature type="domain" description="GH18" evidence="2">
    <location>
        <begin position="190"/>
        <end position="514"/>
    </location>
</feature>
<feature type="active site" description="Proton donor" evidence="2">
    <location>
        <position position="303"/>
    </location>
</feature>
<accession>P27050</accession>
<dbReference type="EC" id="3.2.1.14"/>
<dbReference type="EMBL" id="D10594">
    <property type="protein sequence ID" value="BAA34114.1"/>
    <property type="molecule type" value="Genomic_DNA"/>
</dbReference>
<dbReference type="PIR" id="A41961">
    <property type="entry name" value="A41961"/>
</dbReference>
<dbReference type="SMR" id="P27050"/>
<dbReference type="CAZy" id="CBM12">
    <property type="family name" value="Carbohydrate-Binding Module Family 12"/>
</dbReference>
<dbReference type="CAZy" id="GH18">
    <property type="family name" value="Glycoside Hydrolase Family 18"/>
</dbReference>
<dbReference type="GO" id="GO:0005576">
    <property type="term" value="C:extracellular region"/>
    <property type="evidence" value="ECO:0007669"/>
    <property type="project" value="InterPro"/>
</dbReference>
<dbReference type="GO" id="GO:0030246">
    <property type="term" value="F:carbohydrate binding"/>
    <property type="evidence" value="ECO:0007669"/>
    <property type="project" value="InterPro"/>
</dbReference>
<dbReference type="GO" id="GO:0008061">
    <property type="term" value="F:chitin binding"/>
    <property type="evidence" value="ECO:0007669"/>
    <property type="project" value="InterPro"/>
</dbReference>
<dbReference type="GO" id="GO:0008843">
    <property type="term" value="F:endochitinase activity"/>
    <property type="evidence" value="ECO:0007669"/>
    <property type="project" value="UniProtKB-EC"/>
</dbReference>
<dbReference type="GO" id="GO:0006032">
    <property type="term" value="P:chitin catabolic process"/>
    <property type="evidence" value="ECO:0007669"/>
    <property type="project" value="UniProtKB-KW"/>
</dbReference>
<dbReference type="GO" id="GO:0000272">
    <property type="term" value="P:polysaccharide catabolic process"/>
    <property type="evidence" value="ECO:0007669"/>
    <property type="project" value="UniProtKB-KW"/>
</dbReference>
<dbReference type="CDD" id="cd12214">
    <property type="entry name" value="ChiA1_BD"/>
    <property type="match status" value="1"/>
</dbReference>
<dbReference type="CDD" id="cd00063">
    <property type="entry name" value="FN3"/>
    <property type="match status" value="1"/>
</dbReference>
<dbReference type="CDD" id="cd02871">
    <property type="entry name" value="GH18_chitinase_D-like"/>
    <property type="match status" value="1"/>
</dbReference>
<dbReference type="FunFam" id="2.60.40.10:FF:001114">
    <property type="entry name" value="Chitinase A1"/>
    <property type="match status" value="1"/>
</dbReference>
<dbReference type="Gene3D" id="2.10.10.20">
    <property type="entry name" value="Carbohydrate-binding module superfamily 5/12"/>
    <property type="match status" value="1"/>
</dbReference>
<dbReference type="Gene3D" id="3.20.20.80">
    <property type="entry name" value="Glycosidases"/>
    <property type="match status" value="1"/>
</dbReference>
<dbReference type="Gene3D" id="2.60.40.10">
    <property type="entry name" value="Immunoglobulins"/>
    <property type="match status" value="1"/>
</dbReference>
<dbReference type="InterPro" id="IPR003610">
    <property type="entry name" value="CBM5/12"/>
</dbReference>
<dbReference type="InterPro" id="IPR036573">
    <property type="entry name" value="CBM_sf_5/12"/>
</dbReference>
<dbReference type="InterPro" id="IPR011583">
    <property type="entry name" value="Chitinase_II/V-like_cat"/>
</dbReference>
<dbReference type="InterPro" id="IPR003961">
    <property type="entry name" value="FN3_dom"/>
</dbReference>
<dbReference type="InterPro" id="IPR036116">
    <property type="entry name" value="FN3_sf"/>
</dbReference>
<dbReference type="InterPro" id="IPR001223">
    <property type="entry name" value="Glyco_hydro18_cat"/>
</dbReference>
<dbReference type="InterPro" id="IPR001579">
    <property type="entry name" value="Glyco_hydro_18_chit_AS"/>
</dbReference>
<dbReference type="InterPro" id="IPR017853">
    <property type="entry name" value="Glycoside_hydrolase_SF"/>
</dbReference>
<dbReference type="InterPro" id="IPR050542">
    <property type="entry name" value="Glycosyl_Hydrlase18_Chitinase"/>
</dbReference>
<dbReference type="InterPro" id="IPR013783">
    <property type="entry name" value="Ig-like_fold"/>
</dbReference>
<dbReference type="PANTHER" id="PTHR45708">
    <property type="entry name" value="ENDOCHITINASE"/>
    <property type="match status" value="1"/>
</dbReference>
<dbReference type="PANTHER" id="PTHR45708:SF49">
    <property type="entry name" value="ENDOCHITINASE"/>
    <property type="match status" value="1"/>
</dbReference>
<dbReference type="Pfam" id="PF02839">
    <property type="entry name" value="CBM_5_12"/>
    <property type="match status" value="1"/>
</dbReference>
<dbReference type="Pfam" id="PF00041">
    <property type="entry name" value="fn3"/>
    <property type="match status" value="1"/>
</dbReference>
<dbReference type="Pfam" id="PF00704">
    <property type="entry name" value="Glyco_hydro_18"/>
    <property type="match status" value="1"/>
</dbReference>
<dbReference type="PRINTS" id="PR00014">
    <property type="entry name" value="FNTYPEIII"/>
</dbReference>
<dbReference type="SMART" id="SM00495">
    <property type="entry name" value="ChtBD3"/>
    <property type="match status" value="1"/>
</dbReference>
<dbReference type="SMART" id="SM00060">
    <property type="entry name" value="FN3"/>
    <property type="match status" value="1"/>
</dbReference>
<dbReference type="SMART" id="SM00636">
    <property type="entry name" value="Glyco_18"/>
    <property type="match status" value="1"/>
</dbReference>
<dbReference type="SUPFAM" id="SSF51445">
    <property type="entry name" value="(Trans)glycosidases"/>
    <property type="match status" value="1"/>
</dbReference>
<dbReference type="SUPFAM" id="SSF51055">
    <property type="entry name" value="Carbohydrate binding domain"/>
    <property type="match status" value="1"/>
</dbReference>
<dbReference type="SUPFAM" id="SSF49265">
    <property type="entry name" value="Fibronectin type III"/>
    <property type="match status" value="1"/>
</dbReference>
<dbReference type="PROSITE" id="PS50853">
    <property type="entry name" value="FN3"/>
    <property type="match status" value="1"/>
</dbReference>
<dbReference type="PROSITE" id="PS01095">
    <property type="entry name" value="GH18_1"/>
    <property type="match status" value="1"/>
</dbReference>
<dbReference type="PROSITE" id="PS51910">
    <property type="entry name" value="GH18_2"/>
    <property type="match status" value="1"/>
</dbReference>
<sequence>MNQAVRFRPVITFALAFILIITWFAPRADAAAQWQAGTAYKQGDLVTYLNKDYECIQPHTALTGWEPSNVPALWKYVGEGTGGGTPTPDTTPPTVPAGLTSSLVTDTSVNLTWNASTDNVGVTGYEVYRNGTLVANTSTTTAVVTGLTAGTTYVFTVKAKDAAGNLSAASTSLSVTTSTGSSNPGPSGSKWLIGYWHNFDNGSTNIKLRNVSTAYDVINVSFAEPISPGSGTLAFTPYNATVEEFKSDIAYLQSQGKKVLISMGGANGRIELTDATKKRQQFEDSLKSIISTYGFNGLDIDLEGSSLSLNAGDTDFRSPTTPKIVNLINGVKALKSHFGANFVLTAAPETAYVQGGYLNYGGPWGAYLPVIHALRNDLTLLHVQHYNTGSMVGLDGRSYAQGTADFHVAMAQMLLQGFNVGGSSGPFFSPLRPDQIAIGVPASQQAAGGGYTAPAELQKALNYLIKGVSYGGSYTLRQPAGYVGLKGIMTWSINWDAYTNNQFSNAHRPFLNGLSTQKTEEVVY</sequence>
<proteinExistence type="evidence at protein level"/>
<organism>
    <name type="scientific">Niallia circulans</name>
    <name type="common">Bacillus circulans</name>
    <dbReference type="NCBI Taxonomy" id="1397"/>
    <lineage>
        <taxon>Bacteria</taxon>
        <taxon>Bacillati</taxon>
        <taxon>Bacillota</taxon>
        <taxon>Bacilli</taxon>
        <taxon>Bacillales</taxon>
        <taxon>Bacillaceae</taxon>
        <taxon>Niallia</taxon>
    </lineage>
</organism>
<comment type="catalytic activity">
    <reaction>
        <text>Random endo-hydrolysis of N-acetyl-beta-D-glucosaminide (1-&gt;4)-beta-linkages in chitin and chitodextrins.</text>
        <dbReference type="EC" id="3.2.1.14"/>
    </reaction>
</comment>
<comment type="similarity">
    <text evidence="4">Belongs to the glycosyl hydrolase 18 family. Chitinase class II subfamily.</text>
</comment>
<keyword id="KW-0119">Carbohydrate metabolism</keyword>
<keyword id="KW-0146">Chitin degradation</keyword>
<keyword id="KW-0903">Direct protein sequencing</keyword>
<keyword id="KW-0326">Glycosidase</keyword>
<keyword id="KW-0378">Hydrolase</keyword>
<keyword id="KW-0624">Polysaccharide degradation</keyword>
<keyword id="KW-0732">Signal</keyword>
<name>CHID_NIACI</name>
<reference key="1">
    <citation type="journal article" date="1992" name="J. Bacteriol.">
        <title>Structure of the gene encoding chitinase D of Bacillus circulans WL-12 and possible homology of the enzyme to other prokaryotic chitinases and class III plant chitinases.</title>
        <authorList>
            <person name="Watanabe T."/>
            <person name="Oyanagi W."/>
            <person name="Suzuki K."/>
            <person name="Ohnishi K."/>
            <person name="Tanaka H."/>
        </authorList>
    </citation>
    <scope>NUCLEOTIDE SEQUENCE [GENOMIC DNA]</scope>
    <scope>PROTEIN SEQUENCE OF 31-42</scope>
    <source>
        <strain>WL-12</strain>
    </source>
</reference>
<reference key="2">
    <citation type="submission" date="1998-11" db="EMBL/GenBank/DDBJ databases">
        <authorList>
            <person name="Watanabe T."/>
        </authorList>
    </citation>
    <scope>SEQUENCE REVISION</scope>
</reference>
<gene>
    <name type="primary">chiD</name>
</gene>
<protein>
    <recommendedName>
        <fullName>Chitinase D</fullName>
        <ecNumber>3.2.1.14</ecNumber>
    </recommendedName>
</protein>